<comment type="function">
    <text evidence="1">Involved in the biosynthesis of the osmoprotectant glycine betaine. Catalyzes the irreversible oxidation of betaine aldehyde to the corresponding acid.</text>
</comment>
<comment type="catalytic activity">
    <reaction evidence="1">
        <text>betaine aldehyde + NAD(+) + H2O = glycine betaine + NADH + 2 H(+)</text>
        <dbReference type="Rhea" id="RHEA:15305"/>
        <dbReference type="ChEBI" id="CHEBI:15377"/>
        <dbReference type="ChEBI" id="CHEBI:15378"/>
        <dbReference type="ChEBI" id="CHEBI:15710"/>
        <dbReference type="ChEBI" id="CHEBI:17750"/>
        <dbReference type="ChEBI" id="CHEBI:57540"/>
        <dbReference type="ChEBI" id="CHEBI:57945"/>
        <dbReference type="EC" id="1.2.1.8"/>
    </reaction>
    <physiologicalReaction direction="left-to-right" evidence="1">
        <dbReference type="Rhea" id="RHEA:15306"/>
    </physiologicalReaction>
</comment>
<comment type="cofactor">
    <cofactor evidence="1">
        <name>K(+)</name>
        <dbReference type="ChEBI" id="CHEBI:29103"/>
    </cofactor>
    <text evidence="1">Binds 2 potassium ions per subunit.</text>
</comment>
<comment type="pathway">
    <text evidence="1">Amine and polyamine biosynthesis; betaine biosynthesis via choline pathway; betaine from betaine aldehyde: step 1/1.</text>
</comment>
<comment type="subunit">
    <text evidence="1">Dimer of dimers.</text>
</comment>
<comment type="similarity">
    <text evidence="1">Belongs to the aldehyde dehydrogenase family.</text>
</comment>
<protein>
    <recommendedName>
        <fullName evidence="1">Betaine aldehyde dehydrogenase</fullName>
        <shortName evidence="1">BADH</shortName>
        <ecNumber evidence="1">1.2.1.8</ecNumber>
    </recommendedName>
</protein>
<gene>
    <name evidence="1" type="primary">betB</name>
    <name type="ordered locus">ABBFA_002683</name>
</gene>
<keyword id="KW-0479">Metal-binding</keyword>
<keyword id="KW-0520">NAD</keyword>
<keyword id="KW-0521">NADP</keyword>
<keyword id="KW-0558">Oxidation</keyword>
<keyword id="KW-0560">Oxidoreductase</keyword>
<keyword id="KW-0630">Potassium</keyword>
<organism>
    <name type="scientific">Acinetobacter baumannii (strain AB307-0294)</name>
    <dbReference type="NCBI Taxonomy" id="557600"/>
    <lineage>
        <taxon>Bacteria</taxon>
        <taxon>Pseudomonadati</taxon>
        <taxon>Pseudomonadota</taxon>
        <taxon>Gammaproteobacteria</taxon>
        <taxon>Moraxellales</taxon>
        <taxon>Moraxellaceae</taxon>
        <taxon>Acinetobacter</taxon>
        <taxon>Acinetobacter calcoaceticus/baumannii complex</taxon>
    </lineage>
</organism>
<sequence>MSDVQVHQLYIHGRYVEATSGKTFNSINPANGEIIATLQQASEQDIEAAVKSAQQGQKIWAAMTAMERSRILRRAVDILRERNDELARLETLDTGKAYSETSTVDIVTGADVLEYYAGLATAIQGEQVPLRESSFFYTRREPLGVVAGIGAWNYPIQIALWKSAPALAAGNAMIFKPSETTPLTALKLAEIYTEAGLPDGVFNVVQGAGREIGQWLTEHPVIEKISFTGGVETGKKVMASAAGSTLKEVTMELGGKSPLIICEDADLNRAADIAVMANFFSSGQVCTNGTRVFVPKSRLADFEKAVVERVKRIRVGDPMAEDTNFGPLTSFPHMEKVLSFIESGKQQGAKVLIGGGRATEGELAKGAYVLPTVFSDCTDQMAIVQEEIFGPVMSILSYETEEEVIQRANDTTFGLAAGVVTQDISRAHRIIHQIEAGICWINTWGESPAEMPVGGYKQSGVGRENGLTTLGHYTRIKSIQVELGDYQSIF</sequence>
<dbReference type="EC" id="1.2.1.8" evidence="1"/>
<dbReference type="EMBL" id="CP001172">
    <property type="protein sequence ID" value="ACJ58119.1"/>
    <property type="molecule type" value="Genomic_DNA"/>
</dbReference>
<dbReference type="RefSeq" id="WP_001286307.1">
    <property type="nucleotide sequence ID" value="NZ_CP001172.1"/>
</dbReference>
<dbReference type="SMR" id="B7GYG4"/>
<dbReference type="HOGENOM" id="CLU_005391_0_0_6"/>
<dbReference type="UniPathway" id="UPA00529">
    <property type="reaction ID" value="UER00386"/>
</dbReference>
<dbReference type="Proteomes" id="UP000006924">
    <property type="component" value="Chromosome"/>
</dbReference>
<dbReference type="GO" id="GO:0008802">
    <property type="term" value="F:betaine-aldehyde dehydrogenase (NAD+) activity"/>
    <property type="evidence" value="ECO:0007669"/>
    <property type="project" value="UniProtKB-UniRule"/>
</dbReference>
<dbReference type="GO" id="GO:0046872">
    <property type="term" value="F:metal ion binding"/>
    <property type="evidence" value="ECO:0007669"/>
    <property type="project" value="UniProtKB-KW"/>
</dbReference>
<dbReference type="GO" id="GO:0019285">
    <property type="term" value="P:glycine betaine biosynthetic process from choline"/>
    <property type="evidence" value="ECO:0007669"/>
    <property type="project" value="UniProtKB-UniRule"/>
</dbReference>
<dbReference type="CDD" id="cd07090">
    <property type="entry name" value="ALDH_F9_TMBADH"/>
    <property type="match status" value="1"/>
</dbReference>
<dbReference type="FunFam" id="3.40.309.10:FF:000014">
    <property type="entry name" value="NAD/NADP-dependent betaine aldehyde dehydrogenase"/>
    <property type="match status" value="1"/>
</dbReference>
<dbReference type="FunFam" id="3.40.605.10:FF:000007">
    <property type="entry name" value="NAD/NADP-dependent betaine aldehyde dehydrogenase"/>
    <property type="match status" value="1"/>
</dbReference>
<dbReference type="Gene3D" id="3.40.605.10">
    <property type="entry name" value="Aldehyde Dehydrogenase, Chain A, domain 1"/>
    <property type="match status" value="1"/>
</dbReference>
<dbReference type="Gene3D" id="3.40.309.10">
    <property type="entry name" value="Aldehyde Dehydrogenase, Chain A, domain 2"/>
    <property type="match status" value="1"/>
</dbReference>
<dbReference type="HAMAP" id="MF_00804">
    <property type="entry name" value="BADH"/>
    <property type="match status" value="1"/>
</dbReference>
<dbReference type="InterPro" id="IPR016161">
    <property type="entry name" value="Ald_DH/histidinol_DH"/>
</dbReference>
<dbReference type="InterPro" id="IPR016163">
    <property type="entry name" value="Ald_DH_C"/>
</dbReference>
<dbReference type="InterPro" id="IPR016160">
    <property type="entry name" value="Ald_DH_CS_CYS"/>
</dbReference>
<dbReference type="InterPro" id="IPR029510">
    <property type="entry name" value="Ald_DH_CS_GLU"/>
</dbReference>
<dbReference type="InterPro" id="IPR016162">
    <property type="entry name" value="Ald_DH_N"/>
</dbReference>
<dbReference type="InterPro" id="IPR015590">
    <property type="entry name" value="Aldehyde_DH_dom"/>
</dbReference>
<dbReference type="InterPro" id="IPR011264">
    <property type="entry name" value="BADH"/>
</dbReference>
<dbReference type="NCBIfam" id="TIGR01804">
    <property type="entry name" value="BADH"/>
    <property type="match status" value="1"/>
</dbReference>
<dbReference type="NCBIfam" id="NF009725">
    <property type="entry name" value="PRK13252.1"/>
    <property type="match status" value="1"/>
</dbReference>
<dbReference type="PANTHER" id="PTHR11699">
    <property type="entry name" value="ALDEHYDE DEHYDROGENASE-RELATED"/>
    <property type="match status" value="1"/>
</dbReference>
<dbReference type="Pfam" id="PF00171">
    <property type="entry name" value="Aldedh"/>
    <property type="match status" value="1"/>
</dbReference>
<dbReference type="SUPFAM" id="SSF53720">
    <property type="entry name" value="ALDH-like"/>
    <property type="match status" value="1"/>
</dbReference>
<dbReference type="PROSITE" id="PS00070">
    <property type="entry name" value="ALDEHYDE_DEHYDR_CYS"/>
    <property type="match status" value="1"/>
</dbReference>
<dbReference type="PROSITE" id="PS00687">
    <property type="entry name" value="ALDEHYDE_DEHYDR_GLU"/>
    <property type="match status" value="1"/>
</dbReference>
<reference key="1">
    <citation type="journal article" date="2008" name="J. Bacteriol.">
        <title>Comparative genome sequence analysis of multidrug-resistant Acinetobacter baumannii.</title>
        <authorList>
            <person name="Adams M.D."/>
            <person name="Goglin K."/>
            <person name="Molyneaux N."/>
            <person name="Hujer K.M."/>
            <person name="Lavender H."/>
            <person name="Jamison J.J."/>
            <person name="MacDonald I.J."/>
            <person name="Martin K.M."/>
            <person name="Russo T."/>
            <person name="Campagnari A.A."/>
            <person name="Hujer A.M."/>
            <person name="Bonomo R.A."/>
            <person name="Gill S.R."/>
        </authorList>
    </citation>
    <scope>NUCLEOTIDE SEQUENCE [LARGE SCALE GENOMIC DNA]</scope>
    <source>
        <strain>AB307-0294</strain>
    </source>
</reference>
<name>BETB_ACIB3</name>
<accession>B7GYG4</accession>
<feature type="chain" id="PRO_1000133933" description="Betaine aldehyde dehydrogenase">
    <location>
        <begin position="1"/>
        <end position="490"/>
    </location>
</feature>
<feature type="active site" description="Charge relay system" evidence="1">
    <location>
        <position position="162"/>
    </location>
</feature>
<feature type="active site" description="Proton acceptor" evidence="1">
    <location>
        <position position="252"/>
    </location>
</feature>
<feature type="active site" description="Nucleophile" evidence="1">
    <location>
        <position position="286"/>
    </location>
</feature>
<feature type="active site" description="Charge relay system" evidence="1">
    <location>
        <position position="464"/>
    </location>
</feature>
<feature type="binding site" evidence="1">
    <location>
        <position position="26"/>
    </location>
    <ligand>
        <name>K(+)</name>
        <dbReference type="ChEBI" id="CHEBI:29103"/>
        <label>1</label>
    </ligand>
</feature>
<feature type="binding site" evidence="1">
    <location>
        <position position="27"/>
    </location>
    <ligand>
        <name>K(+)</name>
        <dbReference type="ChEBI" id="CHEBI:29103"/>
        <label>1</label>
    </ligand>
</feature>
<feature type="binding site" evidence="1">
    <location>
        <position position="93"/>
    </location>
    <ligand>
        <name>K(+)</name>
        <dbReference type="ChEBI" id="CHEBI:29103"/>
        <label>1</label>
    </ligand>
</feature>
<feature type="binding site" evidence="1">
    <location>
        <begin position="150"/>
        <end position="152"/>
    </location>
    <ligand>
        <name>NAD(+)</name>
        <dbReference type="ChEBI" id="CHEBI:57540"/>
    </ligand>
</feature>
<feature type="binding site" evidence="1">
    <location>
        <begin position="176"/>
        <end position="179"/>
    </location>
    <ligand>
        <name>NAD(+)</name>
        <dbReference type="ChEBI" id="CHEBI:57540"/>
    </ligand>
</feature>
<feature type="binding site" evidence="1">
    <location>
        <begin position="230"/>
        <end position="233"/>
    </location>
    <ligand>
        <name>NAD(+)</name>
        <dbReference type="ChEBI" id="CHEBI:57540"/>
    </ligand>
</feature>
<feature type="binding site" evidence="1">
    <location>
        <position position="246"/>
    </location>
    <ligand>
        <name>K(+)</name>
        <dbReference type="ChEBI" id="CHEBI:29103"/>
        <label>2</label>
    </ligand>
</feature>
<feature type="binding site" evidence="1">
    <location>
        <position position="254"/>
    </location>
    <ligand>
        <name>NAD(+)</name>
        <dbReference type="ChEBI" id="CHEBI:57540"/>
    </ligand>
</feature>
<feature type="binding site" description="covalent" evidence="1">
    <location>
        <position position="286"/>
    </location>
    <ligand>
        <name>NAD(+)</name>
        <dbReference type="ChEBI" id="CHEBI:57540"/>
    </ligand>
</feature>
<feature type="binding site" evidence="1">
    <location>
        <position position="387"/>
    </location>
    <ligand>
        <name>NAD(+)</name>
        <dbReference type="ChEBI" id="CHEBI:57540"/>
    </ligand>
</feature>
<feature type="binding site" evidence="1">
    <location>
        <position position="457"/>
    </location>
    <ligand>
        <name>K(+)</name>
        <dbReference type="ChEBI" id="CHEBI:29103"/>
        <label>2</label>
    </ligand>
</feature>
<feature type="binding site" evidence="1">
    <location>
        <position position="460"/>
    </location>
    <ligand>
        <name>K(+)</name>
        <dbReference type="ChEBI" id="CHEBI:29103"/>
        <label>2</label>
    </ligand>
</feature>
<feature type="site" description="Seems to be a necessary countercharge to the potassium cations" evidence="1">
    <location>
        <position position="248"/>
    </location>
</feature>
<feature type="modified residue" description="Cysteine sulfenic acid (-SOH)" evidence="1">
    <location>
        <position position="286"/>
    </location>
</feature>
<proteinExistence type="inferred from homology"/>
<evidence type="ECO:0000255" key="1">
    <source>
        <dbReference type="HAMAP-Rule" id="MF_00804"/>
    </source>
</evidence>